<feature type="chain" id="PRO_0000227456" description="UvrABC system protein C">
    <location>
        <begin position="1"/>
        <end position="616"/>
    </location>
</feature>
<feature type="domain" description="GIY-YIG" evidence="1">
    <location>
        <begin position="21"/>
        <end position="99"/>
    </location>
</feature>
<feature type="domain" description="UVR" evidence="1">
    <location>
        <begin position="209"/>
        <end position="244"/>
    </location>
</feature>
<dbReference type="EMBL" id="CR378670">
    <property type="protein sequence ID" value="CAG20623.1"/>
    <property type="molecule type" value="Genomic_DNA"/>
</dbReference>
<dbReference type="SMR" id="Q6LQ03"/>
<dbReference type="STRING" id="298386.PBPRA2237"/>
<dbReference type="KEGG" id="ppr:PBPRA2237"/>
<dbReference type="eggNOG" id="COG0322">
    <property type="taxonomic scope" value="Bacteria"/>
</dbReference>
<dbReference type="HOGENOM" id="CLU_014841_3_2_6"/>
<dbReference type="Proteomes" id="UP000000593">
    <property type="component" value="Chromosome 1"/>
</dbReference>
<dbReference type="GO" id="GO:0005737">
    <property type="term" value="C:cytoplasm"/>
    <property type="evidence" value="ECO:0007669"/>
    <property type="project" value="UniProtKB-SubCell"/>
</dbReference>
<dbReference type="GO" id="GO:0009380">
    <property type="term" value="C:excinuclease repair complex"/>
    <property type="evidence" value="ECO:0007669"/>
    <property type="project" value="InterPro"/>
</dbReference>
<dbReference type="GO" id="GO:0003677">
    <property type="term" value="F:DNA binding"/>
    <property type="evidence" value="ECO:0007669"/>
    <property type="project" value="UniProtKB-UniRule"/>
</dbReference>
<dbReference type="GO" id="GO:0009381">
    <property type="term" value="F:excinuclease ABC activity"/>
    <property type="evidence" value="ECO:0007669"/>
    <property type="project" value="UniProtKB-UniRule"/>
</dbReference>
<dbReference type="GO" id="GO:0006289">
    <property type="term" value="P:nucleotide-excision repair"/>
    <property type="evidence" value="ECO:0007669"/>
    <property type="project" value="UniProtKB-UniRule"/>
</dbReference>
<dbReference type="GO" id="GO:0009432">
    <property type="term" value="P:SOS response"/>
    <property type="evidence" value="ECO:0007669"/>
    <property type="project" value="UniProtKB-UniRule"/>
</dbReference>
<dbReference type="CDD" id="cd10434">
    <property type="entry name" value="GIY-YIG_UvrC_Cho"/>
    <property type="match status" value="1"/>
</dbReference>
<dbReference type="FunFam" id="1.10.150.20:FF:000005">
    <property type="entry name" value="UvrABC system protein C"/>
    <property type="match status" value="1"/>
</dbReference>
<dbReference type="FunFam" id="3.30.420.340:FF:000001">
    <property type="entry name" value="UvrABC system protein C"/>
    <property type="match status" value="1"/>
</dbReference>
<dbReference type="FunFam" id="3.40.1440.10:FF:000001">
    <property type="entry name" value="UvrABC system protein C"/>
    <property type="match status" value="1"/>
</dbReference>
<dbReference type="FunFam" id="4.10.860.10:FF:000002">
    <property type="entry name" value="UvrABC system protein C"/>
    <property type="match status" value="1"/>
</dbReference>
<dbReference type="Gene3D" id="1.10.150.20">
    <property type="entry name" value="5' to 3' exonuclease, C-terminal subdomain"/>
    <property type="match status" value="1"/>
</dbReference>
<dbReference type="Gene3D" id="3.40.1440.10">
    <property type="entry name" value="GIY-YIG endonuclease"/>
    <property type="match status" value="1"/>
</dbReference>
<dbReference type="Gene3D" id="4.10.860.10">
    <property type="entry name" value="UVR domain"/>
    <property type="match status" value="1"/>
</dbReference>
<dbReference type="Gene3D" id="3.30.420.340">
    <property type="entry name" value="UvrC, RNAse H endonuclease domain"/>
    <property type="match status" value="1"/>
</dbReference>
<dbReference type="HAMAP" id="MF_00203">
    <property type="entry name" value="UvrC"/>
    <property type="match status" value="1"/>
</dbReference>
<dbReference type="InterPro" id="IPR000305">
    <property type="entry name" value="GIY-YIG_endonuc"/>
</dbReference>
<dbReference type="InterPro" id="IPR035901">
    <property type="entry name" value="GIY-YIG_endonuc_sf"/>
</dbReference>
<dbReference type="InterPro" id="IPR047296">
    <property type="entry name" value="GIY-YIG_UvrC_Cho"/>
</dbReference>
<dbReference type="InterPro" id="IPR003583">
    <property type="entry name" value="Hlx-hairpin-Hlx_DNA-bd_motif"/>
</dbReference>
<dbReference type="InterPro" id="IPR010994">
    <property type="entry name" value="RuvA_2-like"/>
</dbReference>
<dbReference type="InterPro" id="IPR001943">
    <property type="entry name" value="UVR_dom"/>
</dbReference>
<dbReference type="InterPro" id="IPR036876">
    <property type="entry name" value="UVR_dom_sf"/>
</dbReference>
<dbReference type="InterPro" id="IPR050066">
    <property type="entry name" value="UvrABC_protein_C"/>
</dbReference>
<dbReference type="InterPro" id="IPR004791">
    <property type="entry name" value="UvrC"/>
</dbReference>
<dbReference type="InterPro" id="IPR001162">
    <property type="entry name" value="UvrC_RNase_H_dom"/>
</dbReference>
<dbReference type="InterPro" id="IPR038476">
    <property type="entry name" value="UvrC_RNase_H_dom_sf"/>
</dbReference>
<dbReference type="NCBIfam" id="NF001824">
    <property type="entry name" value="PRK00558.1-5"/>
    <property type="match status" value="1"/>
</dbReference>
<dbReference type="NCBIfam" id="TIGR00194">
    <property type="entry name" value="uvrC"/>
    <property type="match status" value="1"/>
</dbReference>
<dbReference type="PANTHER" id="PTHR30562:SF1">
    <property type="entry name" value="UVRABC SYSTEM PROTEIN C"/>
    <property type="match status" value="1"/>
</dbReference>
<dbReference type="PANTHER" id="PTHR30562">
    <property type="entry name" value="UVRC/OXIDOREDUCTASE"/>
    <property type="match status" value="1"/>
</dbReference>
<dbReference type="Pfam" id="PF01541">
    <property type="entry name" value="GIY-YIG"/>
    <property type="match status" value="1"/>
</dbReference>
<dbReference type="Pfam" id="PF14520">
    <property type="entry name" value="HHH_5"/>
    <property type="match status" value="1"/>
</dbReference>
<dbReference type="Pfam" id="PF02151">
    <property type="entry name" value="UVR"/>
    <property type="match status" value="1"/>
</dbReference>
<dbReference type="Pfam" id="PF22920">
    <property type="entry name" value="UvrC_RNaseH"/>
    <property type="match status" value="1"/>
</dbReference>
<dbReference type="Pfam" id="PF08459">
    <property type="entry name" value="UvrC_RNaseH_dom"/>
    <property type="match status" value="1"/>
</dbReference>
<dbReference type="SMART" id="SM00465">
    <property type="entry name" value="GIYc"/>
    <property type="match status" value="1"/>
</dbReference>
<dbReference type="SMART" id="SM00278">
    <property type="entry name" value="HhH1"/>
    <property type="match status" value="2"/>
</dbReference>
<dbReference type="SUPFAM" id="SSF46600">
    <property type="entry name" value="C-terminal UvrC-binding domain of UvrB"/>
    <property type="match status" value="1"/>
</dbReference>
<dbReference type="SUPFAM" id="SSF82771">
    <property type="entry name" value="GIY-YIG endonuclease"/>
    <property type="match status" value="1"/>
</dbReference>
<dbReference type="SUPFAM" id="SSF47781">
    <property type="entry name" value="RuvA domain 2-like"/>
    <property type="match status" value="1"/>
</dbReference>
<dbReference type="PROSITE" id="PS50164">
    <property type="entry name" value="GIY_YIG"/>
    <property type="match status" value="1"/>
</dbReference>
<dbReference type="PROSITE" id="PS50151">
    <property type="entry name" value="UVR"/>
    <property type="match status" value="1"/>
</dbReference>
<dbReference type="PROSITE" id="PS50165">
    <property type="entry name" value="UVRC"/>
    <property type="match status" value="1"/>
</dbReference>
<accession>Q6LQ03</accession>
<name>UVRC_PHOPR</name>
<comment type="function">
    <text evidence="1">The UvrABC repair system catalyzes the recognition and processing of DNA lesions. UvrC both incises the 5' and 3' sides of the lesion. The N-terminal half is responsible for the 3' incision and the C-terminal half is responsible for the 5' incision.</text>
</comment>
<comment type="subunit">
    <text evidence="1">Interacts with UvrB in an incision complex.</text>
</comment>
<comment type="subcellular location">
    <subcellularLocation>
        <location evidence="1">Cytoplasm</location>
    </subcellularLocation>
</comment>
<comment type="similarity">
    <text evidence="1">Belongs to the UvrC family.</text>
</comment>
<sequence length="616" mass="69815">MSEALDEKSFDAKSFLKTVTHQPGVYRMYDAVGDVIYVGKAKDLKKRLSSYFRINVAGEKTRALVKNICKVDVTVTHTETEALILEHNYIKLYLPKYNVLLRDDKSYPYIFLSNHHHPRLSIHRGTKKRKGEYFGPYPDAGAVRESLHLMQKLFPIRQCEDSVYANRSRPCLMYQIGRCLAPCVKELITEKDYEDQVSFARLFLQGKDRQVIASLVEKMEQASQSLNFEQAATFRDQIQALRRVQEQQFVSHDSEDDLDVIGIAHQNGMACIHALYIRQGKILGSRSYFPKMPSDAELTEVLSSFITQFYLNQAEGRVIPSVIILGENLGDDAAVITETLSDIAGRKIELKVNPRGNRARYLKLAQTNAMTALTSKLSHKMTIHERFSELRKALNLETISRMECFDISHTMGEKTVASCVVFNQEGPFKQDYRRYNITGITGGDDYAAMGQVLERRYGKPMEPEKIPDIIFIDGGRGQLSRAYNVVKPFMDEWPKQPLLIGIAKGVTRKAGLETLIFITGEEFSLPSDSPALHLIQHIRDESHNHAISGHRAQRAKVRKRSALEDVEGIGPKRRQALLKFMGGLHELKRASREEIAKVPGISKALAEKIYDALQHG</sequence>
<gene>
    <name evidence="1" type="primary">uvrC</name>
    <name type="ordered locus">PBPRA2237</name>
</gene>
<protein>
    <recommendedName>
        <fullName evidence="1">UvrABC system protein C</fullName>
        <shortName evidence="1">Protein UvrC</shortName>
    </recommendedName>
    <alternativeName>
        <fullName evidence="1">Excinuclease ABC subunit C</fullName>
    </alternativeName>
</protein>
<organism>
    <name type="scientific">Photobacterium profundum (strain SS9)</name>
    <dbReference type="NCBI Taxonomy" id="298386"/>
    <lineage>
        <taxon>Bacteria</taxon>
        <taxon>Pseudomonadati</taxon>
        <taxon>Pseudomonadota</taxon>
        <taxon>Gammaproteobacteria</taxon>
        <taxon>Vibrionales</taxon>
        <taxon>Vibrionaceae</taxon>
        <taxon>Photobacterium</taxon>
    </lineage>
</organism>
<reference key="1">
    <citation type="journal article" date="2005" name="Science">
        <title>Life at depth: Photobacterium profundum genome sequence and expression analysis.</title>
        <authorList>
            <person name="Vezzi A."/>
            <person name="Campanaro S."/>
            <person name="D'Angelo M."/>
            <person name="Simonato F."/>
            <person name="Vitulo N."/>
            <person name="Lauro F.M."/>
            <person name="Cestaro A."/>
            <person name="Malacrida G."/>
            <person name="Simionati B."/>
            <person name="Cannata N."/>
            <person name="Romualdi C."/>
            <person name="Bartlett D.H."/>
            <person name="Valle G."/>
        </authorList>
    </citation>
    <scope>NUCLEOTIDE SEQUENCE [LARGE SCALE GENOMIC DNA]</scope>
    <source>
        <strain>ATCC BAA-1253 / SS9</strain>
    </source>
</reference>
<proteinExistence type="inferred from homology"/>
<evidence type="ECO:0000255" key="1">
    <source>
        <dbReference type="HAMAP-Rule" id="MF_00203"/>
    </source>
</evidence>
<keyword id="KW-0963">Cytoplasm</keyword>
<keyword id="KW-0227">DNA damage</keyword>
<keyword id="KW-0228">DNA excision</keyword>
<keyword id="KW-0234">DNA repair</keyword>
<keyword id="KW-0267">Excision nuclease</keyword>
<keyword id="KW-1185">Reference proteome</keyword>
<keyword id="KW-0742">SOS response</keyword>